<organism>
    <name type="scientific">Trypanosoma brucei brucei</name>
    <dbReference type="NCBI Taxonomy" id="5702"/>
    <lineage>
        <taxon>Eukaryota</taxon>
        <taxon>Discoba</taxon>
        <taxon>Euglenozoa</taxon>
        <taxon>Kinetoplastea</taxon>
        <taxon>Metakinetoplastina</taxon>
        <taxon>Trypanosomatida</taxon>
        <taxon>Trypanosomatidae</taxon>
        <taxon>Trypanosoma</taxon>
    </lineage>
</organism>
<keyword id="KW-0002">3D-structure</keyword>
<keyword id="KW-0067">ATP-binding</keyword>
<keyword id="KW-0115">cAMP biosynthesis</keyword>
<keyword id="KW-0325">Glycoprotein</keyword>
<keyword id="KW-0456">Lyase</keyword>
<keyword id="KW-0460">Magnesium</keyword>
<keyword id="KW-0472">Membrane</keyword>
<keyword id="KW-0479">Metal-binding</keyword>
<keyword id="KW-0547">Nucleotide-binding</keyword>
<keyword id="KW-0675">Receptor</keyword>
<keyword id="KW-0812">Transmembrane</keyword>
<keyword id="KW-1133">Transmembrane helix</keyword>
<protein>
    <recommendedName>
        <fullName>Receptor-type adenylate cyclase GRESAG 4.3</fullName>
        <ecNumber>4.6.1.1</ecNumber>
    </recommendedName>
    <alternativeName>
        <fullName>ATP pyrophosphate-lyase</fullName>
    </alternativeName>
    <alternativeName>
        <fullName>Adenylyl cyclase</fullName>
    </alternativeName>
</protein>
<dbReference type="EC" id="4.6.1.1"/>
<dbReference type="EMBL" id="X52121">
    <property type="protein sequence ID" value="CAA36366.1"/>
    <property type="molecule type" value="mRNA"/>
</dbReference>
<dbReference type="PIR" id="S14199">
    <property type="entry name" value="S14199"/>
</dbReference>
<dbReference type="PDB" id="1FX4">
    <property type="method" value="X-ray"/>
    <property type="resolution" value="1.90 A"/>
    <property type="chains" value="A=876-1106"/>
</dbReference>
<dbReference type="PDBsum" id="1FX4"/>
<dbReference type="SMR" id="Q99280"/>
<dbReference type="GlyCosmos" id="Q99280">
    <property type="glycosylation" value="5 sites, No reported glycans"/>
</dbReference>
<dbReference type="EvolutionaryTrace" id="Q99280"/>
<dbReference type="GO" id="GO:0016020">
    <property type="term" value="C:membrane"/>
    <property type="evidence" value="ECO:0007669"/>
    <property type="project" value="UniProtKB-SubCell"/>
</dbReference>
<dbReference type="GO" id="GO:0004016">
    <property type="term" value="F:adenylate cyclase activity"/>
    <property type="evidence" value="ECO:0007669"/>
    <property type="project" value="UniProtKB-EC"/>
</dbReference>
<dbReference type="GO" id="GO:0005524">
    <property type="term" value="F:ATP binding"/>
    <property type="evidence" value="ECO:0007669"/>
    <property type="project" value="UniProtKB-KW"/>
</dbReference>
<dbReference type="GO" id="GO:0046872">
    <property type="term" value="F:metal ion binding"/>
    <property type="evidence" value="ECO:0007669"/>
    <property type="project" value="UniProtKB-KW"/>
</dbReference>
<dbReference type="GO" id="GO:0006171">
    <property type="term" value="P:cAMP biosynthetic process"/>
    <property type="evidence" value="ECO:0007669"/>
    <property type="project" value="UniProtKB-KW"/>
</dbReference>
<dbReference type="GO" id="GO:0035556">
    <property type="term" value="P:intracellular signal transduction"/>
    <property type="evidence" value="ECO:0007669"/>
    <property type="project" value="InterPro"/>
</dbReference>
<dbReference type="CDD" id="cd07556">
    <property type="entry name" value="Nucleotidyl_cyc_III"/>
    <property type="match status" value="1"/>
</dbReference>
<dbReference type="FunFam" id="3.30.70.1230:FF:000022">
    <property type="entry name" value="Receptor-type adenylate cyclase GRESAG 4, putative"/>
    <property type="match status" value="1"/>
</dbReference>
<dbReference type="Gene3D" id="3.30.70.1230">
    <property type="entry name" value="Nucleotide cyclase"/>
    <property type="match status" value="1"/>
</dbReference>
<dbReference type="InterPro" id="IPR001054">
    <property type="entry name" value="A/G_cyclase"/>
</dbReference>
<dbReference type="InterPro" id="IPR050697">
    <property type="entry name" value="Adenylyl/Guanylyl_Cyclase_3/4"/>
</dbReference>
<dbReference type="InterPro" id="IPR029787">
    <property type="entry name" value="Nucleotide_cyclase"/>
</dbReference>
<dbReference type="PANTHER" id="PTHR43081:SF1">
    <property type="entry name" value="ADENYLATE CYCLASE, TERMINAL-DIFFERENTIATION SPECIFIC"/>
    <property type="match status" value="1"/>
</dbReference>
<dbReference type="PANTHER" id="PTHR43081">
    <property type="entry name" value="ADENYLATE CYCLASE, TERMINAL-DIFFERENTIATION SPECIFIC-RELATED"/>
    <property type="match status" value="1"/>
</dbReference>
<dbReference type="Pfam" id="PF00211">
    <property type="entry name" value="Guanylate_cyc"/>
    <property type="match status" value="1"/>
</dbReference>
<dbReference type="Pfam" id="PF25493">
    <property type="entry name" value="Peripla_BP_A-cyclase"/>
    <property type="match status" value="1"/>
</dbReference>
<dbReference type="Pfam" id="PF25495">
    <property type="entry name" value="Peripla_BP_A-cyclase_1"/>
    <property type="match status" value="1"/>
</dbReference>
<dbReference type="SMART" id="SM00044">
    <property type="entry name" value="CYCc"/>
    <property type="match status" value="1"/>
</dbReference>
<dbReference type="SUPFAM" id="SSF55073">
    <property type="entry name" value="Nucleotide cyclase"/>
    <property type="match status" value="1"/>
</dbReference>
<dbReference type="PROSITE" id="PS50125">
    <property type="entry name" value="GUANYLATE_CYCLASE_2"/>
    <property type="match status" value="1"/>
</dbReference>
<accession>Q99280</accession>
<name>CY43_TRYBB</name>
<sequence>MIARVCRLTKHSKPPHLPITLTTPTLFLVVLVLLQLHPICVLVNVDDGGGVTVKAISLLYSRKWNVKVINAVNAGLNASLAARNWTVAPGVNVEVVRPPSYDIDPAQFLDVYLKVLNDDKSLLVVLGPMGNDDAEKLYDTLEENRLVGFGPMTVSTRHEGYMPHLYFLRPEATGESYCPSTLCGESLRVLRQGFMYLDGLLGGSEAYDHAVDFISRMGYSFCCVFTVEDKAGGQGGSSEEFDAVWDEFAGGNPQAVIMFATMKPDAKKFLVRLVSDPRTEDTFVLTPIFLQKSIVSIWKETLEEANVPLHPHRVIQTGSNPLAKEDYIDAIKRFQTEMRNYLTEYKEWSGFNDADHFLKNDADGELMVNGWIAGEVLRRALRSHGWMNTATAFLESLYEQRRYVIDDIVVGDFGGECDSFTSANGATCRCNRGGKNVYMREIAEDYRLQPLVGGHIMTTPLQCHIDPSILRPPLTGLTVDMEDHEELLRGSTQFETGVSTTTSSGKAGEMNSFFLQKVVTDTQKVSNELNTLRQERIVTAVFGIVTKAVLGLPGLTFIDPITPTPHLNSFSRNVIHLSPTLEQQLYVLVNYLSSIRADFPNCVIRGGEAPAIIDALRKTLVTFGLNLSSTVVLTPGDTVGEHLPKSGITFIIGLAVDDIVVIEEHLRIHTKARVLVQFSDIALLYNEFVQAFNNSDGAKHLLFATSLPHWADVDTTSETVRRFHEAVREVEKWTPLSLLGFTTGRLIQENLQNMERVTSDLLVDLFFNQTVITIDDMHYGPYKHYDCIINGVVTADDCMANFGATDISVWSMARALRSDEPLLQNPMSPSLVYTVPNGNALTPAQLAGVVGGSLFVVALAICLSVLACFTLRGTRDNDSAPKEPTGPVTLIFTDIESSTALWAAHPDLMPDAVATHHRLIRSLITRYECYEVKTVGDSFMIASKSPFAAVQLAQELQLRFLRLDWETNALDESYREFEEQRAEGECEYTPPTAHMDPEVYSRLWNGLRVRVGIHTGLCDIRYDEVTKGYDYYGRTSNMAARTESVANGGQVLMTHAAYMSLSGEDRNQLDVTTLGATVLRGVPEPVRMYQLNAVPGRNFAALRLDRELFNDGEDETTTSCSDHSSLRAELSIAAQTIAASLQSLLGTFTPAQRQKALTPFCERCGVTLPRKMGHVWDNDSCQEVIRRIAAKVGHVVDRHAAETRERSVCTLSSGSVIIISNDLSDMIRV</sequence>
<gene>
    <name type="primary">GRESAG 4.3</name>
</gene>
<evidence type="ECO:0000255" key="1"/>
<evidence type="ECO:0000255" key="2">
    <source>
        <dbReference type="PROSITE-ProRule" id="PRU00099"/>
    </source>
</evidence>
<evidence type="ECO:0000305" key="3"/>
<evidence type="ECO:0007829" key="4">
    <source>
        <dbReference type="PDB" id="1FX4"/>
    </source>
</evidence>
<feature type="chain" id="PRO_0000195739" description="Receptor-type adenylate cyclase GRESAG 4.3">
    <location>
        <begin position="1"/>
        <end position="1229"/>
    </location>
</feature>
<feature type="topological domain" description="Cytoplasmic" evidence="1">
    <location>
        <begin position="1"/>
        <end position="24"/>
    </location>
</feature>
<feature type="transmembrane region" description="Helical" evidence="1">
    <location>
        <begin position="25"/>
        <end position="45"/>
    </location>
</feature>
<feature type="topological domain" description="Extracellular" evidence="1">
    <location>
        <begin position="46"/>
        <end position="845"/>
    </location>
</feature>
<feature type="transmembrane region" description="Helical" evidence="1">
    <location>
        <begin position="846"/>
        <end position="866"/>
    </location>
</feature>
<feature type="topological domain" description="Cytoplasmic" evidence="1">
    <location>
        <begin position="867"/>
        <end position="1229"/>
    </location>
</feature>
<feature type="domain" description="Guanylate cyclase" evidence="2">
    <location>
        <begin position="889"/>
        <end position="1043"/>
    </location>
</feature>
<feature type="binding site">
    <location>
        <position position="894"/>
    </location>
    <ligand>
        <name>Mg(2+)</name>
        <dbReference type="ChEBI" id="CHEBI:18420"/>
    </ligand>
</feature>
<feature type="binding site">
    <location>
        <position position="937"/>
    </location>
    <ligand>
        <name>Mg(2+)</name>
        <dbReference type="ChEBI" id="CHEBI:18420"/>
    </ligand>
</feature>
<feature type="glycosylation site" description="N-linked (GlcNAc...) asparagine" evidence="1">
    <location>
        <position position="77"/>
    </location>
</feature>
<feature type="glycosylation site" description="N-linked (GlcNAc...) asparagine" evidence="1">
    <location>
        <position position="84"/>
    </location>
</feature>
<feature type="glycosylation site" description="N-linked (GlcNAc...) asparagine" evidence="1">
    <location>
        <position position="626"/>
    </location>
</feature>
<feature type="glycosylation site" description="N-linked (GlcNAc...) asparagine" evidence="1">
    <location>
        <position position="693"/>
    </location>
</feature>
<feature type="glycosylation site" description="N-linked (GlcNAc...) asparagine" evidence="1">
    <location>
        <position position="768"/>
    </location>
</feature>
<feature type="strand" evidence="4">
    <location>
        <begin position="888"/>
        <end position="895"/>
    </location>
</feature>
<feature type="helix" evidence="4">
    <location>
        <begin position="898"/>
        <end position="904"/>
    </location>
</feature>
<feature type="turn" evidence="4">
    <location>
        <begin position="906"/>
        <end position="908"/>
    </location>
</feature>
<feature type="helix" evidence="4">
    <location>
        <begin position="909"/>
        <end position="926"/>
    </location>
</feature>
<feature type="strand" evidence="4">
    <location>
        <begin position="930"/>
        <end position="935"/>
    </location>
</feature>
<feature type="strand" evidence="4">
    <location>
        <begin position="938"/>
        <end position="944"/>
    </location>
</feature>
<feature type="helix" evidence="4">
    <location>
        <begin position="946"/>
        <end position="962"/>
    </location>
</feature>
<feature type="helix" evidence="4">
    <location>
        <begin position="969"/>
        <end position="984"/>
    </location>
</feature>
<feature type="strand" evidence="4">
    <location>
        <begin position="985"/>
        <end position="987"/>
    </location>
</feature>
<feature type="helix" evidence="4">
    <location>
        <begin position="997"/>
        <end position="1003"/>
    </location>
</feature>
<feature type="strand" evidence="4">
    <location>
        <begin position="1009"/>
        <end position="1016"/>
    </location>
</feature>
<feature type="strand" evidence="4">
    <location>
        <begin position="1019"/>
        <end position="1022"/>
    </location>
</feature>
<feature type="turn" evidence="4">
    <location>
        <begin position="1024"/>
        <end position="1026"/>
    </location>
</feature>
<feature type="strand" evidence="4">
    <location>
        <begin position="1029"/>
        <end position="1033"/>
    </location>
</feature>
<feature type="helix" evidence="4">
    <location>
        <begin position="1034"/>
        <end position="1045"/>
    </location>
</feature>
<feature type="strand" evidence="4">
    <location>
        <begin position="1051"/>
        <end position="1054"/>
    </location>
</feature>
<feature type="helix" evidence="4">
    <location>
        <begin position="1055"/>
        <end position="1060"/>
    </location>
</feature>
<feature type="helix" evidence="4">
    <location>
        <begin position="1063"/>
        <end position="1067"/>
    </location>
</feature>
<feature type="strand" evidence="4">
    <location>
        <begin position="1071"/>
        <end position="1077"/>
    </location>
</feature>
<feature type="strand" evidence="4">
    <location>
        <begin position="1086"/>
        <end position="1091"/>
    </location>
</feature>
<reference key="1">
    <citation type="journal article" date="1990" name="Mol. Biochem. Parasitol.">
        <title>Differential expression of a family of putative adenylate/guanylate cyclase genes in Trypanosoma brucei.</title>
        <authorList>
            <person name="Alexandre S."/>
            <person name="Paindavione P."/>
            <person name="Tebabi P."/>
            <person name="Pays A."/>
            <person name="Halleux S."/>
            <person name="Steinert M."/>
            <person name="Pays E."/>
        </authorList>
    </citation>
    <scope>NUCLEOTIDE SEQUENCE [MRNA]</scope>
    <source>
        <strain>EATRO 1125</strain>
    </source>
</reference>
<reference key="2">
    <citation type="journal article" date="2001" name="EMBO J.">
        <title>Structural analysis of adenylate cyclases from Trypanosoma brucei in their monomeric state.</title>
        <authorList>
            <person name="Bieger B."/>
            <person name="Essen L.-O."/>
        </authorList>
    </citation>
    <scope>X-RAY CRYSTALLOGRAPHY (1.9 ANGSTROMS)</scope>
</reference>
<reference key="3">
    <citation type="journal article" date="2001" name="EMBO J.">
        <authorList>
            <person name="Bieger B."/>
            <person name="Essen L.-O."/>
        </authorList>
    </citation>
    <scope>ERRATUM OF PUBMED:11157750</scope>
</reference>
<proteinExistence type="evidence at protein level"/>
<comment type="function">
    <text>Could act as a receptor for an unknown ligand.</text>
</comment>
<comment type="catalytic activity">
    <reaction>
        <text>ATP = 3',5'-cyclic AMP + diphosphate</text>
        <dbReference type="Rhea" id="RHEA:15389"/>
        <dbReference type="ChEBI" id="CHEBI:30616"/>
        <dbReference type="ChEBI" id="CHEBI:33019"/>
        <dbReference type="ChEBI" id="CHEBI:58165"/>
        <dbReference type="EC" id="4.6.1.1"/>
    </reaction>
</comment>
<comment type="cofactor">
    <cofactor>
        <name>Mg(2+)</name>
        <dbReference type="ChEBI" id="CHEBI:18420"/>
    </cofactor>
    <text>Binds 1 Mg(2+) ion per subunit.</text>
</comment>
<comment type="subcellular location">
    <subcellularLocation>
        <location evidence="3">Membrane</location>
        <topology evidence="3">Multi-pass membrane protein</topology>
    </subcellularLocation>
</comment>
<comment type="similarity">
    <text evidence="3">Belongs to the adenylyl cyclase class-3 family.</text>
</comment>